<protein>
    <recommendedName>
        <fullName>Elongation factor Tu, chloroplastic</fullName>
        <shortName>EF-Tu</shortName>
        <ecNumber evidence="2">3.6.5.3</ecNumber>
    </recommendedName>
</protein>
<accession>A0T100</accession>
<reference key="1">
    <citation type="journal article" date="2007" name="Mol. Genet. Genomics">
        <title>Chloroplast genomes of the diatoms Phaeodactylum tricornutum and Thalassiosira pseudonana: comparison with other plastid genomes of the red lineage.</title>
        <authorList>
            <person name="Oudot-Le Secq M.-P."/>
            <person name="Grimwood J."/>
            <person name="Shapiro H."/>
            <person name="Armbrust E.V."/>
            <person name="Bowler C."/>
            <person name="Green B.R."/>
        </authorList>
    </citation>
    <scope>NUCLEOTIDE SEQUENCE [LARGE SCALE GENOMIC DNA]</scope>
    <source>
        <strain>CCMP1335 / NEPCC58 / CCAP 1085/12</strain>
    </source>
</reference>
<feature type="chain" id="PRO_0000275384" description="Elongation factor Tu, chloroplastic">
    <location>
        <begin position="1"/>
        <end position="409"/>
    </location>
</feature>
<feature type="domain" description="tr-type G">
    <location>
        <begin position="10"/>
        <end position="214"/>
    </location>
</feature>
<feature type="region of interest" description="G1" evidence="1">
    <location>
        <begin position="19"/>
        <end position="26"/>
    </location>
</feature>
<feature type="region of interest" description="G2" evidence="1">
    <location>
        <begin position="60"/>
        <end position="64"/>
    </location>
</feature>
<feature type="region of interest" description="G3" evidence="1">
    <location>
        <begin position="81"/>
        <end position="84"/>
    </location>
</feature>
<feature type="region of interest" description="G4" evidence="1">
    <location>
        <begin position="136"/>
        <end position="139"/>
    </location>
</feature>
<feature type="region of interest" description="G5" evidence="1">
    <location>
        <begin position="174"/>
        <end position="176"/>
    </location>
</feature>
<feature type="binding site" evidence="1">
    <location>
        <begin position="19"/>
        <end position="26"/>
    </location>
    <ligand>
        <name>GTP</name>
        <dbReference type="ChEBI" id="CHEBI:37565"/>
    </ligand>
</feature>
<feature type="binding site" evidence="2">
    <location>
        <position position="26"/>
    </location>
    <ligand>
        <name>Mg(2+)</name>
        <dbReference type="ChEBI" id="CHEBI:18420"/>
    </ligand>
</feature>
<feature type="binding site" evidence="1">
    <location>
        <begin position="81"/>
        <end position="85"/>
    </location>
    <ligand>
        <name>GTP</name>
        <dbReference type="ChEBI" id="CHEBI:37565"/>
    </ligand>
</feature>
<feature type="binding site" evidence="1">
    <location>
        <begin position="136"/>
        <end position="139"/>
    </location>
    <ligand>
        <name>GTP</name>
        <dbReference type="ChEBI" id="CHEBI:37565"/>
    </ligand>
</feature>
<geneLocation type="chloroplast"/>
<name>EFTU_THAPS</name>
<organism>
    <name type="scientific">Thalassiosira pseudonana</name>
    <name type="common">Marine diatom</name>
    <name type="synonym">Cyclotella nana</name>
    <dbReference type="NCBI Taxonomy" id="35128"/>
    <lineage>
        <taxon>Eukaryota</taxon>
        <taxon>Sar</taxon>
        <taxon>Stramenopiles</taxon>
        <taxon>Ochrophyta</taxon>
        <taxon>Bacillariophyta</taxon>
        <taxon>Coscinodiscophyceae</taxon>
        <taxon>Thalassiosirophycidae</taxon>
        <taxon>Thalassiosirales</taxon>
        <taxon>Thalassiosiraceae</taxon>
        <taxon>Thalassiosira</taxon>
    </lineage>
</organism>
<proteinExistence type="inferred from homology"/>
<evidence type="ECO:0000250" key="1"/>
<evidence type="ECO:0000255" key="2">
    <source>
        <dbReference type="HAMAP-Rule" id="MF_00118"/>
    </source>
</evidence>
<evidence type="ECO:0000305" key="3"/>
<comment type="function">
    <text evidence="2">GTP hydrolase that promotes the GTP-dependent binding of aminoacyl-tRNA to the A-site of ribosomes during protein biosynthesis.</text>
</comment>
<comment type="catalytic activity">
    <reaction evidence="2">
        <text>GTP + H2O = GDP + phosphate + H(+)</text>
        <dbReference type="Rhea" id="RHEA:19669"/>
        <dbReference type="ChEBI" id="CHEBI:15377"/>
        <dbReference type="ChEBI" id="CHEBI:15378"/>
        <dbReference type="ChEBI" id="CHEBI:37565"/>
        <dbReference type="ChEBI" id="CHEBI:43474"/>
        <dbReference type="ChEBI" id="CHEBI:58189"/>
        <dbReference type="EC" id="3.6.5.3"/>
    </reaction>
    <physiologicalReaction direction="left-to-right" evidence="2">
        <dbReference type="Rhea" id="RHEA:19670"/>
    </physiologicalReaction>
</comment>
<comment type="subcellular location">
    <subcellularLocation>
        <location>Plastid</location>
        <location>Chloroplast</location>
    </subcellularLocation>
</comment>
<comment type="similarity">
    <text evidence="3">Belongs to the TRAFAC class translation factor GTPase superfamily. Classic translation factor GTPase family. EF-Tu/EF-1A subfamily.</text>
</comment>
<sequence length="409" mass="44457">MAREKFERTKPHVNIGTIGHVDHGKTTLTAAITATLATAGGAVAKDYSDIDGAPEERARGITINTAHVEYETADRHYAHVDCPGHADYVKNMITGAAQMDGAILVVSAADGPMPQTREHILLAKQVGVPHIVVFLNKQDQVDDDELLELVELEVRELLSTYDFPGDDIPICPGSALQAIEALSSNPDVKRGDNPWVDKIFALMDAVDAYIPTPERDVEKTFLMAIEDVFSITGRGTVATGRIERGVVKVGDNVEIVGVGDTQTTTITGIEMFQKTLEEGFAGDNVGILLRGVTRENIERGMVLSKPGTITPHTNFESEVYVLTKEEGGRHTPFFTGYRPQFYVRTTDVTGSIEQFTADDGTIVEMVMPGDRIKMTAELIYPVAIEEGMRFAIREGGRTIGAGVVSKIVK</sequence>
<keyword id="KW-0150">Chloroplast</keyword>
<keyword id="KW-0251">Elongation factor</keyword>
<keyword id="KW-0342">GTP-binding</keyword>
<keyword id="KW-0378">Hydrolase</keyword>
<keyword id="KW-0460">Magnesium</keyword>
<keyword id="KW-0479">Metal-binding</keyword>
<keyword id="KW-0547">Nucleotide-binding</keyword>
<keyword id="KW-0934">Plastid</keyword>
<keyword id="KW-0648">Protein biosynthesis</keyword>
<dbReference type="EC" id="3.6.5.3" evidence="2"/>
<dbReference type="EMBL" id="EF067921">
    <property type="protein sequence ID" value="ABK20835.1"/>
    <property type="molecule type" value="Genomic_DNA"/>
</dbReference>
<dbReference type="RefSeq" id="YP_874612.1">
    <property type="nucleotide sequence ID" value="NC_008589.1"/>
</dbReference>
<dbReference type="SMR" id="A0T100"/>
<dbReference type="FunCoup" id="A0T100">
    <property type="interactions" value="341"/>
</dbReference>
<dbReference type="STRING" id="35128.A0T100"/>
<dbReference type="GeneID" id="4524812"/>
<dbReference type="InParanoid" id="A0T100"/>
<dbReference type="GO" id="GO:0009507">
    <property type="term" value="C:chloroplast"/>
    <property type="evidence" value="ECO:0007669"/>
    <property type="project" value="UniProtKB-SubCell"/>
</dbReference>
<dbReference type="GO" id="GO:0005525">
    <property type="term" value="F:GTP binding"/>
    <property type="evidence" value="ECO:0007669"/>
    <property type="project" value="UniProtKB-UniRule"/>
</dbReference>
<dbReference type="GO" id="GO:0003924">
    <property type="term" value="F:GTPase activity"/>
    <property type="evidence" value="ECO:0007669"/>
    <property type="project" value="InterPro"/>
</dbReference>
<dbReference type="GO" id="GO:0003746">
    <property type="term" value="F:translation elongation factor activity"/>
    <property type="evidence" value="ECO:0000318"/>
    <property type="project" value="GO_Central"/>
</dbReference>
<dbReference type="GO" id="GO:0006414">
    <property type="term" value="P:translational elongation"/>
    <property type="evidence" value="ECO:0000318"/>
    <property type="project" value="GO_Central"/>
</dbReference>
<dbReference type="CDD" id="cd01884">
    <property type="entry name" value="EF_Tu"/>
    <property type="match status" value="1"/>
</dbReference>
<dbReference type="CDD" id="cd03697">
    <property type="entry name" value="EFTU_II"/>
    <property type="match status" value="1"/>
</dbReference>
<dbReference type="CDD" id="cd03707">
    <property type="entry name" value="EFTU_III"/>
    <property type="match status" value="1"/>
</dbReference>
<dbReference type="FunFam" id="2.40.30.10:FF:000001">
    <property type="entry name" value="Elongation factor Tu"/>
    <property type="match status" value="1"/>
</dbReference>
<dbReference type="FunFam" id="2.40.30.10:FF:000046">
    <property type="entry name" value="Elongation factor Tu"/>
    <property type="match status" value="1"/>
</dbReference>
<dbReference type="FunFam" id="3.40.50.300:FF:000003">
    <property type="entry name" value="Elongation factor Tu"/>
    <property type="match status" value="1"/>
</dbReference>
<dbReference type="Gene3D" id="3.40.50.300">
    <property type="entry name" value="P-loop containing nucleotide triphosphate hydrolases"/>
    <property type="match status" value="1"/>
</dbReference>
<dbReference type="Gene3D" id="2.40.30.10">
    <property type="entry name" value="Translation factors"/>
    <property type="match status" value="2"/>
</dbReference>
<dbReference type="HAMAP" id="MF_00118_B">
    <property type="entry name" value="EF_Tu_B"/>
    <property type="match status" value="1"/>
</dbReference>
<dbReference type="InterPro" id="IPR041709">
    <property type="entry name" value="EF-Tu_GTP-bd"/>
</dbReference>
<dbReference type="InterPro" id="IPR050055">
    <property type="entry name" value="EF-Tu_GTPase"/>
</dbReference>
<dbReference type="InterPro" id="IPR004161">
    <property type="entry name" value="EFTu-like_2"/>
</dbReference>
<dbReference type="InterPro" id="IPR033720">
    <property type="entry name" value="EFTU_2"/>
</dbReference>
<dbReference type="InterPro" id="IPR031157">
    <property type="entry name" value="G_TR_CS"/>
</dbReference>
<dbReference type="InterPro" id="IPR027417">
    <property type="entry name" value="P-loop_NTPase"/>
</dbReference>
<dbReference type="InterPro" id="IPR005225">
    <property type="entry name" value="Small_GTP-bd"/>
</dbReference>
<dbReference type="InterPro" id="IPR000795">
    <property type="entry name" value="T_Tr_GTP-bd_dom"/>
</dbReference>
<dbReference type="InterPro" id="IPR009000">
    <property type="entry name" value="Transl_B-barrel_sf"/>
</dbReference>
<dbReference type="InterPro" id="IPR009001">
    <property type="entry name" value="Transl_elong_EF1A/Init_IF2_C"/>
</dbReference>
<dbReference type="InterPro" id="IPR004541">
    <property type="entry name" value="Transl_elong_EFTu/EF1A_bac/org"/>
</dbReference>
<dbReference type="InterPro" id="IPR004160">
    <property type="entry name" value="Transl_elong_EFTu/EF1A_C"/>
</dbReference>
<dbReference type="NCBIfam" id="TIGR00485">
    <property type="entry name" value="EF-Tu"/>
    <property type="match status" value="1"/>
</dbReference>
<dbReference type="NCBIfam" id="NF000766">
    <property type="entry name" value="PRK00049.1"/>
    <property type="match status" value="1"/>
</dbReference>
<dbReference type="NCBIfam" id="NF009372">
    <property type="entry name" value="PRK12735.1"/>
    <property type="match status" value="1"/>
</dbReference>
<dbReference type="NCBIfam" id="NF009373">
    <property type="entry name" value="PRK12736.1"/>
    <property type="match status" value="1"/>
</dbReference>
<dbReference type="NCBIfam" id="TIGR00231">
    <property type="entry name" value="small_GTP"/>
    <property type="match status" value="1"/>
</dbReference>
<dbReference type="PANTHER" id="PTHR43721:SF22">
    <property type="entry name" value="ELONGATION FACTOR TU, MITOCHONDRIAL"/>
    <property type="match status" value="1"/>
</dbReference>
<dbReference type="PANTHER" id="PTHR43721">
    <property type="entry name" value="ELONGATION FACTOR TU-RELATED"/>
    <property type="match status" value="1"/>
</dbReference>
<dbReference type="Pfam" id="PF00009">
    <property type="entry name" value="GTP_EFTU"/>
    <property type="match status" value="1"/>
</dbReference>
<dbReference type="Pfam" id="PF03144">
    <property type="entry name" value="GTP_EFTU_D2"/>
    <property type="match status" value="1"/>
</dbReference>
<dbReference type="Pfam" id="PF03143">
    <property type="entry name" value="GTP_EFTU_D3"/>
    <property type="match status" value="1"/>
</dbReference>
<dbReference type="PRINTS" id="PR00315">
    <property type="entry name" value="ELONGATNFCT"/>
</dbReference>
<dbReference type="SUPFAM" id="SSF50465">
    <property type="entry name" value="EF-Tu/eEF-1alpha/eIF2-gamma C-terminal domain"/>
    <property type="match status" value="1"/>
</dbReference>
<dbReference type="SUPFAM" id="SSF52540">
    <property type="entry name" value="P-loop containing nucleoside triphosphate hydrolases"/>
    <property type="match status" value="1"/>
</dbReference>
<dbReference type="SUPFAM" id="SSF50447">
    <property type="entry name" value="Translation proteins"/>
    <property type="match status" value="1"/>
</dbReference>
<dbReference type="PROSITE" id="PS00301">
    <property type="entry name" value="G_TR_1"/>
    <property type="match status" value="1"/>
</dbReference>
<dbReference type="PROSITE" id="PS51722">
    <property type="entry name" value="G_TR_2"/>
    <property type="match status" value="1"/>
</dbReference>
<gene>
    <name type="primary">tufA</name>
</gene>